<evidence type="ECO:0000255" key="1">
    <source>
        <dbReference type="HAMAP-Rule" id="MF_00539"/>
    </source>
</evidence>
<evidence type="ECO:0000256" key="2">
    <source>
        <dbReference type="SAM" id="MobiDB-lite"/>
    </source>
</evidence>
<evidence type="ECO:0000305" key="3"/>
<name>RL27_YERPS</name>
<feature type="chain" id="PRO_0000181214" description="Large ribosomal subunit protein bL27">
    <location>
        <begin position="1"/>
        <end position="85"/>
    </location>
</feature>
<feature type="region of interest" description="Disordered" evidence="2">
    <location>
        <begin position="1"/>
        <end position="20"/>
    </location>
</feature>
<protein>
    <recommendedName>
        <fullName evidence="1">Large ribosomal subunit protein bL27</fullName>
    </recommendedName>
    <alternativeName>
        <fullName evidence="3">50S ribosomal protein L27</fullName>
    </alternativeName>
</protein>
<organism>
    <name type="scientific">Yersinia pseudotuberculosis serotype I (strain IP32953)</name>
    <dbReference type="NCBI Taxonomy" id="273123"/>
    <lineage>
        <taxon>Bacteria</taxon>
        <taxon>Pseudomonadati</taxon>
        <taxon>Pseudomonadota</taxon>
        <taxon>Gammaproteobacteria</taxon>
        <taxon>Enterobacterales</taxon>
        <taxon>Yersiniaceae</taxon>
        <taxon>Yersinia</taxon>
    </lineage>
</organism>
<gene>
    <name evidence="1" type="primary">rpmA</name>
    <name type="ordered locus">YPTB0465</name>
</gene>
<sequence>MAHKKAGGSTRNGRDSESKRLGVKRFGGEAVLAGSIIVRQRGTKFHAGINVGCGKDHTLFALADGKVKFEVKGPKNRKFISIEAE</sequence>
<accession>Q66F75</accession>
<keyword id="KW-0687">Ribonucleoprotein</keyword>
<keyword id="KW-0689">Ribosomal protein</keyword>
<reference key="1">
    <citation type="journal article" date="2004" name="Proc. Natl. Acad. Sci. U.S.A.">
        <title>Insights into the evolution of Yersinia pestis through whole-genome comparison with Yersinia pseudotuberculosis.</title>
        <authorList>
            <person name="Chain P.S.G."/>
            <person name="Carniel E."/>
            <person name="Larimer F.W."/>
            <person name="Lamerdin J."/>
            <person name="Stoutland P.O."/>
            <person name="Regala W.M."/>
            <person name="Georgescu A.M."/>
            <person name="Vergez L.M."/>
            <person name="Land M.L."/>
            <person name="Motin V.L."/>
            <person name="Brubaker R.R."/>
            <person name="Fowler J."/>
            <person name="Hinnebusch J."/>
            <person name="Marceau M."/>
            <person name="Medigue C."/>
            <person name="Simonet M."/>
            <person name="Chenal-Francisque V."/>
            <person name="Souza B."/>
            <person name="Dacheux D."/>
            <person name="Elliott J.M."/>
            <person name="Derbise A."/>
            <person name="Hauser L.J."/>
            <person name="Garcia E."/>
        </authorList>
    </citation>
    <scope>NUCLEOTIDE SEQUENCE [LARGE SCALE GENOMIC DNA]</scope>
    <source>
        <strain>IP32953</strain>
    </source>
</reference>
<comment type="similarity">
    <text evidence="1">Belongs to the bacterial ribosomal protein bL27 family.</text>
</comment>
<dbReference type="EMBL" id="BX936398">
    <property type="protein sequence ID" value="CAH19705.1"/>
    <property type="molecule type" value="Genomic_DNA"/>
</dbReference>
<dbReference type="RefSeq" id="WP_002210179.1">
    <property type="nucleotide sequence ID" value="NZ_CP009712.1"/>
</dbReference>
<dbReference type="SMR" id="Q66F75"/>
<dbReference type="GeneID" id="97457883"/>
<dbReference type="KEGG" id="ypo:BZ17_2100"/>
<dbReference type="KEGG" id="yps:YPTB0465"/>
<dbReference type="PATRIC" id="fig|273123.14.peg.2226"/>
<dbReference type="Proteomes" id="UP000001011">
    <property type="component" value="Chromosome"/>
</dbReference>
<dbReference type="GO" id="GO:0022625">
    <property type="term" value="C:cytosolic large ribosomal subunit"/>
    <property type="evidence" value="ECO:0007669"/>
    <property type="project" value="TreeGrafter"/>
</dbReference>
<dbReference type="GO" id="GO:0003735">
    <property type="term" value="F:structural constituent of ribosome"/>
    <property type="evidence" value="ECO:0007669"/>
    <property type="project" value="InterPro"/>
</dbReference>
<dbReference type="GO" id="GO:0006412">
    <property type="term" value="P:translation"/>
    <property type="evidence" value="ECO:0007669"/>
    <property type="project" value="UniProtKB-UniRule"/>
</dbReference>
<dbReference type="FunFam" id="2.40.50.100:FF:000001">
    <property type="entry name" value="50S ribosomal protein L27"/>
    <property type="match status" value="1"/>
</dbReference>
<dbReference type="Gene3D" id="2.40.50.100">
    <property type="match status" value="1"/>
</dbReference>
<dbReference type="HAMAP" id="MF_00539">
    <property type="entry name" value="Ribosomal_bL27"/>
    <property type="match status" value="1"/>
</dbReference>
<dbReference type="InterPro" id="IPR001684">
    <property type="entry name" value="Ribosomal_bL27"/>
</dbReference>
<dbReference type="InterPro" id="IPR018261">
    <property type="entry name" value="Ribosomal_bL27_CS"/>
</dbReference>
<dbReference type="NCBIfam" id="TIGR00062">
    <property type="entry name" value="L27"/>
    <property type="match status" value="1"/>
</dbReference>
<dbReference type="PANTHER" id="PTHR15893:SF0">
    <property type="entry name" value="LARGE RIBOSOMAL SUBUNIT PROTEIN BL27M"/>
    <property type="match status" value="1"/>
</dbReference>
<dbReference type="PANTHER" id="PTHR15893">
    <property type="entry name" value="RIBOSOMAL PROTEIN L27"/>
    <property type="match status" value="1"/>
</dbReference>
<dbReference type="Pfam" id="PF01016">
    <property type="entry name" value="Ribosomal_L27"/>
    <property type="match status" value="1"/>
</dbReference>
<dbReference type="PRINTS" id="PR00063">
    <property type="entry name" value="RIBOSOMALL27"/>
</dbReference>
<dbReference type="SUPFAM" id="SSF110324">
    <property type="entry name" value="Ribosomal L27 protein-like"/>
    <property type="match status" value="1"/>
</dbReference>
<dbReference type="PROSITE" id="PS00831">
    <property type="entry name" value="RIBOSOMAL_L27"/>
    <property type="match status" value="1"/>
</dbReference>
<proteinExistence type="inferred from homology"/>